<dbReference type="EMBL" id="CP001052">
    <property type="protein sequence ID" value="ACD17541.1"/>
    <property type="molecule type" value="Genomic_DNA"/>
</dbReference>
<dbReference type="RefSeq" id="WP_012434114.1">
    <property type="nucleotide sequence ID" value="NC_010681.1"/>
</dbReference>
<dbReference type="SMR" id="B2T6H7"/>
<dbReference type="STRING" id="398527.Bphyt_3149"/>
<dbReference type="GeneID" id="97308176"/>
<dbReference type="KEGG" id="bpy:Bphyt_3149"/>
<dbReference type="eggNOG" id="COG0227">
    <property type="taxonomic scope" value="Bacteria"/>
</dbReference>
<dbReference type="HOGENOM" id="CLU_064548_3_1_4"/>
<dbReference type="OrthoDB" id="9805609at2"/>
<dbReference type="Proteomes" id="UP000001739">
    <property type="component" value="Chromosome 1"/>
</dbReference>
<dbReference type="GO" id="GO:0022625">
    <property type="term" value="C:cytosolic large ribosomal subunit"/>
    <property type="evidence" value="ECO:0007669"/>
    <property type="project" value="TreeGrafter"/>
</dbReference>
<dbReference type="GO" id="GO:0003735">
    <property type="term" value="F:structural constituent of ribosome"/>
    <property type="evidence" value="ECO:0007669"/>
    <property type="project" value="InterPro"/>
</dbReference>
<dbReference type="GO" id="GO:0006412">
    <property type="term" value="P:translation"/>
    <property type="evidence" value="ECO:0007669"/>
    <property type="project" value="UniProtKB-UniRule"/>
</dbReference>
<dbReference type="FunFam" id="2.30.170.40:FF:000001">
    <property type="entry name" value="50S ribosomal protein L28"/>
    <property type="match status" value="1"/>
</dbReference>
<dbReference type="Gene3D" id="2.30.170.40">
    <property type="entry name" value="Ribosomal protein L28/L24"/>
    <property type="match status" value="1"/>
</dbReference>
<dbReference type="HAMAP" id="MF_00373">
    <property type="entry name" value="Ribosomal_bL28"/>
    <property type="match status" value="1"/>
</dbReference>
<dbReference type="InterPro" id="IPR026569">
    <property type="entry name" value="Ribosomal_bL28"/>
</dbReference>
<dbReference type="InterPro" id="IPR034704">
    <property type="entry name" value="Ribosomal_bL28/bL31-like_sf"/>
</dbReference>
<dbReference type="InterPro" id="IPR001383">
    <property type="entry name" value="Ribosomal_bL28_bact-type"/>
</dbReference>
<dbReference type="InterPro" id="IPR037147">
    <property type="entry name" value="Ribosomal_bL28_sf"/>
</dbReference>
<dbReference type="NCBIfam" id="TIGR00009">
    <property type="entry name" value="L28"/>
    <property type="match status" value="1"/>
</dbReference>
<dbReference type="PANTHER" id="PTHR13528">
    <property type="entry name" value="39S RIBOSOMAL PROTEIN L28, MITOCHONDRIAL"/>
    <property type="match status" value="1"/>
</dbReference>
<dbReference type="PANTHER" id="PTHR13528:SF2">
    <property type="entry name" value="LARGE RIBOSOMAL SUBUNIT PROTEIN BL28M"/>
    <property type="match status" value="1"/>
</dbReference>
<dbReference type="Pfam" id="PF00830">
    <property type="entry name" value="Ribosomal_L28"/>
    <property type="match status" value="1"/>
</dbReference>
<dbReference type="SUPFAM" id="SSF143800">
    <property type="entry name" value="L28p-like"/>
    <property type="match status" value="1"/>
</dbReference>
<gene>
    <name evidence="1" type="primary">rpmB</name>
    <name type="ordered locus">Bphyt_3149</name>
</gene>
<organism>
    <name type="scientific">Paraburkholderia phytofirmans (strain DSM 17436 / LMG 22146 / PsJN)</name>
    <name type="common">Burkholderia phytofirmans</name>
    <dbReference type="NCBI Taxonomy" id="398527"/>
    <lineage>
        <taxon>Bacteria</taxon>
        <taxon>Pseudomonadati</taxon>
        <taxon>Pseudomonadota</taxon>
        <taxon>Betaproteobacteria</taxon>
        <taxon>Burkholderiales</taxon>
        <taxon>Burkholderiaceae</taxon>
        <taxon>Paraburkholderia</taxon>
    </lineage>
</organism>
<feature type="chain" id="PRO_1000121599" description="Large ribosomal subunit protein bL28">
    <location>
        <begin position="1"/>
        <end position="77"/>
    </location>
</feature>
<feature type="region of interest" description="Disordered" evidence="2">
    <location>
        <begin position="1"/>
        <end position="25"/>
    </location>
</feature>
<name>RL28_PARPJ</name>
<sequence>MARVCQVTGKAPMSGNNVSHANNKTKRRFLPNLQSRRIWVESENRFVRLRISNAGLRLIDKNGIDSVLADLRARGEA</sequence>
<evidence type="ECO:0000255" key="1">
    <source>
        <dbReference type="HAMAP-Rule" id="MF_00373"/>
    </source>
</evidence>
<evidence type="ECO:0000256" key="2">
    <source>
        <dbReference type="SAM" id="MobiDB-lite"/>
    </source>
</evidence>
<evidence type="ECO:0000305" key="3"/>
<proteinExistence type="inferred from homology"/>
<accession>B2T6H7</accession>
<reference key="1">
    <citation type="journal article" date="2011" name="J. Bacteriol.">
        <title>Complete genome sequence of the plant growth-promoting endophyte Burkholderia phytofirmans strain PsJN.</title>
        <authorList>
            <person name="Weilharter A."/>
            <person name="Mitter B."/>
            <person name="Shin M.V."/>
            <person name="Chain P.S."/>
            <person name="Nowak J."/>
            <person name="Sessitsch A."/>
        </authorList>
    </citation>
    <scope>NUCLEOTIDE SEQUENCE [LARGE SCALE GENOMIC DNA]</scope>
    <source>
        <strain>DSM 17436 / LMG 22146 / PsJN</strain>
    </source>
</reference>
<keyword id="KW-0687">Ribonucleoprotein</keyword>
<keyword id="KW-0689">Ribosomal protein</keyword>
<protein>
    <recommendedName>
        <fullName evidence="1">Large ribosomal subunit protein bL28</fullName>
    </recommendedName>
    <alternativeName>
        <fullName evidence="3">50S ribosomal protein L28</fullName>
    </alternativeName>
</protein>
<comment type="similarity">
    <text evidence="1">Belongs to the bacterial ribosomal protein bL28 family.</text>
</comment>